<name>FLGN_ECOLI</name>
<sequence>MTRLAEILDQMSAVLNDLKTVMDQEQQHLSMGQINGSQLQWITEQKSSLLATLDYLEQLRRKEPNTANSVDISQRWQEITVKTQQLRQMNQHNGWLLEGQIERNQQALEMLKPHQEPTLYGANGQTSTTHRGGKKISI</sequence>
<keyword id="KW-1005">Bacterial flagellum biogenesis</keyword>
<keyword id="KW-0963">Cytoplasm</keyword>
<keyword id="KW-1185">Reference proteome</keyword>
<proteinExistence type="evidence at protein level"/>
<evidence type="ECO:0000250" key="1"/>
<evidence type="ECO:0000256" key="2">
    <source>
        <dbReference type="SAM" id="MobiDB-lite"/>
    </source>
</evidence>
<evidence type="ECO:0000305" key="3"/>
<feature type="chain" id="PRO_0000180867" description="Flagella synthesis protein FlgN">
    <location>
        <begin position="1"/>
        <end position="138"/>
    </location>
</feature>
<feature type="region of interest" description="Disordered" evidence="2">
    <location>
        <begin position="117"/>
        <end position="138"/>
    </location>
</feature>
<accession>P43533</accession>
<accession>P77520</accession>
<reference key="1">
    <citation type="journal article" date="1996" name="DNA Res.">
        <title>A 718-kb DNA sequence of the Escherichia coli K-12 genome corresponding to the 12.7-28.0 min region on the linkage map.</title>
        <authorList>
            <person name="Oshima T."/>
            <person name="Aiba H."/>
            <person name="Baba T."/>
            <person name="Fujita K."/>
            <person name="Hayashi K."/>
            <person name="Honjo A."/>
            <person name="Ikemoto K."/>
            <person name="Inada T."/>
            <person name="Itoh T."/>
            <person name="Kajihara M."/>
            <person name="Kanai K."/>
            <person name="Kashimoto K."/>
            <person name="Kimura S."/>
            <person name="Kitagawa M."/>
            <person name="Makino K."/>
            <person name="Masuda S."/>
            <person name="Miki T."/>
            <person name="Mizobuchi K."/>
            <person name="Mori H."/>
            <person name="Motomura K."/>
            <person name="Nakamura Y."/>
            <person name="Nashimoto H."/>
            <person name="Nishio Y."/>
            <person name="Saito N."/>
            <person name="Sampei G."/>
            <person name="Seki Y."/>
            <person name="Tagami H."/>
            <person name="Takemoto K."/>
            <person name="Wada C."/>
            <person name="Yamamoto Y."/>
            <person name="Yano M."/>
            <person name="Horiuchi T."/>
        </authorList>
    </citation>
    <scope>NUCLEOTIDE SEQUENCE [LARGE SCALE GENOMIC DNA]</scope>
    <source>
        <strain>K12 / W3110 / ATCC 27325 / DSM 5911</strain>
    </source>
</reference>
<reference key="2">
    <citation type="journal article" date="1997" name="Science">
        <title>The complete genome sequence of Escherichia coli K-12.</title>
        <authorList>
            <person name="Blattner F.R."/>
            <person name="Plunkett G. III"/>
            <person name="Bloch C.A."/>
            <person name="Perna N.T."/>
            <person name="Burland V."/>
            <person name="Riley M."/>
            <person name="Collado-Vides J."/>
            <person name="Glasner J.D."/>
            <person name="Rode C.K."/>
            <person name="Mayhew G.F."/>
            <person name="Gregor J."/>
            <person name="Davis N.W."/>
            <person name="Kirkpatrick H.A."/>
            <person name="Goeden M.A."/>
            <person name="Rose D.J."/>
            <person name="Mau B."/>
            <person name="Shao Y."/>
        </authorList>
    </citation>
    <scope>NUCLEOTIDE SEQUENCE [LARGE SCALE GENOMIC DNA]</scope>
    <source>
        <strain>K12 / MG1655 / ATCC 47076</strain>
    </source>
</reference>
<reference key="3">
    <citation type="journal article" date="2006" name="Mol. Syst. Biol.">
        <title>Highly accurate genome sequences of Escherichia coli K-12 strains MG1655 and W3110.</title>
        <authorList>
            <person name="Hayashi K."/>
            <person name="Morooka N."/>
            <person name="Yamamoto Y."/>
            <person name="Fujita K."/>
            <person name="Isono K."/>
            <person name="Choi S."/>
            <person name="Ohtsubo E."/>
            <person name="Baba T."/>
            <person name="Wanner B.L."/>
            <person name="Mori H."/>
            <person name="Horiuchi T."/>
        </authorList>
    </citation>
    <scope>NUCLEOTIDE SEQUENCE [LARGE SCALE GENOMIC DNA]</scope>
    <source>
        <strain>K12 / W3110 / ATCC 27325 / DSM 5911</strain>
    </source>
</reference>
<reference key="4">
    <citation type="submission" date="1995-01" db="EMBL/GenBank/DDBJ databases">
        <authorList>
            <person name="Mytelka D.S."/>
            <person name="Chamberlin M.J."/>
        </authorList>
    </citation>
    <scope>NUCLEOTIDE SEQUENCE [GENOMIC DNA] OF 1-38</scope>
</reference>
<protein>
    <recommendedName>
        <fullName>Flagella synthesis protein FlgN</fullName>
    </recommendedName>
</protein>
<comment type="function">
    <text evidence="1">Required for the efficient initiation of filament assembly.</text>
</comment>
<comment type="interaction">
    <interactant intactId="EBI-1121833">
        <id>P43533</id>
    </interactant>
    <interactant intactId="EBI-551382">
        <id>P33235</id>
        <label>flgK</label>
    </interactant>
    <organismsDiffer>false</organismsDiffer>
    <experiments>3</experiments>
</comment>
<comment type="subcellular location">
    <subcellularLocation>
        <location evidence="3">Cytoplasm</location>
    </subcellularLocation>
</comment>
<comment type="similarity">
    <text evidence="3">Belongs to the FlgN family.</text>
</comment>
<gene>
    <name type="primary">flgN</name>
    <name type="ordered locus">b1070</name>
    <name type="ordered locus">JW1057</name>
</gene>
<organism>
    <name type="scientific">Escherichia coli (strain K12)</name>
    <dbReference type="NCBI Taxonomy" id="83333"/>
    <lineage>
        <taxon>Bacteria</taxon>
        <taxon>Pseudomonadati</taxon>
        <taxon>Pseudomonadota</taxon>
        <taxon>Gammaproteobacteria</taxon>
        <taxon>Enterobacterales</taxon>
        <taxon>Enterobacteriaceae</taxon>
        <taxon>Escherichia</taxon>
    </lineage>
</organism>
<dbReference type="EMBL" id="U00096">
    <property type="protein sequence ID" value="AAC74154.1"/>
    <property type="molecule type" value="Genomic_DNA"/>
</dbReference>
<dbReference type="EMBL" id="AP009048">
    <property type="protein sequence ID" value="BAA35878.1"/>
    <property type="molecule type" value="Genomic_DNA"/>
</dbReference>
<dbReference type="EMBL" id="U19773">
    <property type="protein sequence ID" value="AAA61763.1"/>
    <property type="molecule type" value="Genomic_DNA"/>
</dbReference>
<dbReference type="PIR" id="C64850">
    <property type="entry name" value="C64850"/>
</dbReference>
<dbReference type="RefSeq" id="NP_415588.1">
    <property type="nucleotide sequence ID" value="NC_000913.3"/>
</dbReference>
<dbReference type="RefSeq" id="WP_000197363.1">
    <property type="nucleotide sequence ID" value="NZ_SSZK01000053.1"/>
</dbReference>
<dbReference type="SMR" id="P43533"/>
<dbReference type="BioGRID" id="4260825">
    <property type="interactions" value="20"/>
</dbReference>
<dbReference type="BioGRID" id="850006">
    <property type="interactions" value="2"/>
</dbReference>
<dbReference type="FunCoup" id="P43533">
    <property type="interactions" value="13"/>
</dbReference>
<dbReference type="IntAct" id="P43533">
    <property type="interactions" value="9"/>
</dbReference>
<dbReference type="STRING" id="511145.b1070"/>
<dbReference type="PaxDb" id="511145-b1070"/>
<dbReference type="EnsemblBacteria" id="AAC74154">
    <property type="protein sequence ID" value="AAC74154"/>
    <property type="gene ID" value="b1070"/>
</dbReference>
<dbReference type="GeneID" id="93776337"/>
<dbReference type="GeneID" id="945634"/>
<dbReference type="KEGG" id="ecj:JW1057"/>
<dbReference type="KEGG" id="eco:b1070"/>
<dbReference type="KEGG" id="ecoc:C3026_06495"/>
<dbReference type="PATRIC" id="fig|1411691.4.peg.1198"/>
<dbReference type="EchoBASE" id="EB2531"/>
<dbReference type="eggNOG" id="COG3418">
    <property type="taxonomic scope" value="Bacteria"/>
</dbReference>
<dbReference type="HOGENOM" id="CLU_137423_2_1_6"/>
<dbReference type="InParanoid" id="P43533"/>
<dbReference type="OMA" id="HIEHNTQ"/>
<dbReference type="OrthoDB" id="6462803at2"/>
<dbReference type="PhylomeDB" id="P43533"/>
<dbReference type="BioCyc" id="EcoCyc:G6562-MONOMER"/>
<dbReference type="PRO" id="PR:P43533"/>
<dbReference type="Proteomes" id="UP000000625">
    <property type="component" value="Chromosome"/>
</dbReference>
<dbReference type="GO" id="GO:0005737">
    <property type="term" value="C:cytoplasm"/>
    <property type="evidence" value="ECO:0007669"/>
    <property type="project" value="UniProtKB-SubCell"/>
</dbReference>
<dbReference type="GO" id="GO:0044780">
    <property type="term" value="P:bacterial-type flagellum assembly"/>
    <property type="evidence" value="ECO:0007669"/>
    <property type="project" value="InterPro"/>
</dbReference>
<dbReference type="Gene3D" id="1.20.58.300">
    <property type="entry name" value="FlgN-like"/>
    <property type="match status" value="1"/>
</dbReference>
<dbReference type="InterPro" id="IPR007809">
    <property type="entry name" value="FlgN-like"/>
</dbReference>
<dbReference type="InterPro" id="IPR036679">
    <property type="entry name" value="FlgN-like_sf"/>
</dbReference>
<dbReference type="NCBIfam" id="NF012003">
    <property type="entry name" value="PRK15459.1"/>
    <property type="match status" value="1"/>
</dbReference>
<dbReference type="Pfam" id="PF05130">
    <property type="entry name" value="FlgN"/>
    <property type="match status" value="1"/>
</dbReference>
<dbReference type="SUPFAM" id="SSF140566">
    <property type="entry name" value="FlgN-like"/>
    <property type="match status" value="1"/>
</dbReference>